<sequence length="344" mass="37194">MSNAITMGIFWHLIGAASAACFYAPFKKVKKWSWETMWSVGGIVSWIILPWAISALLLPNFWAYYSSFSLSTLLPVFLFGAMCGIGNINYGLTMRYLGMSMGIGIAIGITLIVGTLMTPIINGNFDVLISTEGGRMTLLGVLVALIGVGIVTRAGQLKERKMGIKAEEFNLKKGLVLAVMCGIFSAGMSFAMNAAKPMHEAAAALGVDPLYVALPSYVVIMGGGAIINLGFCFIRLAKVKDLSLKADFSLAKSLIIHNVLLSTLGGLMWYLQFFFYAWGHARIPAQYDYISWMLHMSFYVLCGGIVGLVLKEWNNAGRRPVTVLSLGCVVIIVAANIVGIGMAN</sequence>
<accession>A8A711</accession>
<keyword id="KW-0997">Cell inner membrane</keyword>
<keyword id="KW-1003">Cell membrane</keyword>
<keyword id="KW-0472">Membrane</keyword>
<keyword id="KW-0762">Sugar transport</keyword>
<keyword id="KW-0769">Symport</keyword>
<keyword id="KW-0812">Transmembrane</keyword>
<keyword id="KW-1133">Transmembrane helix</keyword>
<keyword id="KW-0813">Transport</keyword>
<dbReference type="EMBL" id="CP000802">
    <property type="protein sequence ID" value="ABV08315.1"/>
    <property type="molecule type" value="Genomic_DNA"/>
</dbReference>
<dbReference type="RefSeq" id="WP_000063499.1">
    <property type="nucleotide sequence ID" value="NC_009800.1"/>
</dbReference>
<dbReference type="KEGG" id="ecx:EcHS_A4137"/>
<dbReference type="HOGENOM" id="CLU_066437_0_0_6"/>
<dbReference type="GO" id="GO:0005886">
    <property type="term" value="C:plasma membrane"/>
    <property type="evidence" value="ECO:0007669"/>
    <property type="project" value="UniProtKB-SubCell"/>
</dbReference>
<dbReference type="GO" id="GO:0015153">
    <property type="term" value="F:rhamnose transmembrane transporter activity"/>
    <property type="evidence" value="ECO:0007669"/>
    <property type="project" value="UniProtKB-UniRule"/>
</dbReference>
<dbReference type="GO" id="GO:0015293">
    <property type="term" value="F:symporter activity"/>
    <property type="evidence" value="ECO:0007669"/>
    <property type="project" value="UniProtKB-KW"/>
</dbReference>
<dbReference type="HAMAP" id="MF_01532">
    <property type="entry name" value="RhaT"/>
    <property type="match status" value="1"/>
</dbReference>
<dbReference type="InterPro" id="IPR004673">
    <property type="entry name" value="L-rhamnose-proton_sym_RhaT"/>
</dbReference>
<dbReference type="NCBIfam" id="NF010021">
    <property type="entry name" value="PRK13499.1-1"/>
    <property type="match status" value="1"/>
</dbReference>
<dbReference type="NCBIfam" id="NF010023">
    <property type="entry name" value="PRK13499.1-3"/>
    <property type="match status" value="1"/>
</dbReference>
<dbReference type="NCBIfam" id="TIGR00776">
    <property type="entry name" value="RhaT"/>
    <property type="match status" value="1"/>
</dbReference>
<dbReference type="Pfam" id="PF06379">
    <property type="entry name" value="RhaT"/>
    <property type="match status" value="1"/>
</dbReference>
<proteinExistence type="inferred from homology"/>
<comment type="function">
    <text evidence="1">Uptake of L-rhamnose across the cytoplasmic membrane with the concomitant transport of protons into the cell (symport system).</text>
</comment>
<comment type="catalytic activity">
    <reaction evidence="1">
        <text>L-rhamnopyranose(in) + H(+)(in) = L-rhamnopyranose(out) + H(+)(out)</text>
        <dbReference type="Rhea" id="RHEA:29947"/>
        <dbReference type="ChEBI" id="CHEBI:15378"/>
        <dbReference type="ChEBI" id="CHEBI:62346"/>
    </reaction>
    <physiologicalReaction direction="right-to-left" evidence="1">
        <dbReference type="Rhea" id="RHEA:29949"/>
    </physiologicalReaction>
</comment>
<comment type="subcellular location">
    <subcellularLocation>
        <location evidence="1">Cell inner membrane</location>
        <topology evidence="1">Multi-pass membrane protein</topology>
    </subcellularLocation>
</comment>
<comment type="similarity">
    <text evidence="1">Belongs to the L-rhamnose transporter (TC 2.A.7.6) family.</text>
</comment>
<organism>
    <name type="scientific">Escherichia coli O9:H4 (strain HS)</name>
    <dbReference type="NCBI Taxonomy" id="331112"/>
    <lineage>
        <taxon>Bacteria</taxon>
        <taxon>Pseudomonadati</taxon>
        <taxon>Pseudomonadota</taxon>
        <taxon>Gammaproteobacteria</taxon>
        <taxon>Enterobacterales</taxon>
        <taxon>Enterobacteriaceae</taxon>
        <taxon>Escherichia</taxon>
    </lineage>
</organism>
<evidence type="ECO:0000255" key="1">
    <source>
        <dbReference type="HAMAP-Rule" id="MF_01532"/>
    </source>
</evidence>
<feature type="chain" id="PRO_1000068691" description="L-rhamnose-proton symporter">
    <location>
        <begin position="1"/>
        <end position="344"/>
    </location>
</feature>
<feature type="transmembrane region" description="Helical" evidence="1">
    <location>
        <begin position="4"/>
        <end position="24"/>
    </location>
</feature>
<feature type="transmembrane region" description="Helical" evidence="1">
    <location>
        <begin position="38"/>
        <end position="58"/>
    </location>
</feature>
<feature type="transmembrane region" description="Helical" evidence="1">
    <location>
        <begin position="68"/>
        <end position="88"/>
    </location>
</feature>
<feature type="transmembrane region" description="Helical" evidence="1">
    <location>
        <begin position="101"/>
        <end position="121"/>
    </location>
</feature>
<feature type="transmembrane region" description="Helical" evidence="1">
    <location>
        <begin position="137"/>
        <end position="157"/>
    </location>
</feature>
<feature type="transmembrane region" description="Helical" evidence="1">
    <location>
        <begin position="175"/>
        <end position="195"/>
    </location>
</feature>
<feature type="transmembrane region" description="Helical" evidence="1">
    <location>
        <begin position="214"/>
        <end position="234"/>
    </location>
</feature>
<feature type="transmembrane region" description="Helical" evidence="1">
    <location>
        <begin position="259"/>
        <end position="279"/>
    </location>
</feature>
<feature type="transmembrane region" description="Helical" evidence="1">
    <location>
        <begin position="290"/>
        <end position="310"/>
    </location>
</feature>
<feature type="transmembrane region" description="Helical" evidence="1">
    <location>
        <begin position="323"/>
        <end position="343"/>
    </location>
</feature>
<name>RHAT_ECOHS</name>
<gene>
    <name evidence="1" type="primary">rhaT</name>
    <name type="ordered locus">EcHS_A4137</name>
</gene>
<reference key="1">
    <citation type="journal article" date="2008" name="J. Bacteriol.">
        <title>The pangenome structure of Escherichia coli: comparative genomic analysis of E. coli commensal and pathogenic isolates.</title>
        <authorList>
            <person name="Rasko D.A."/>
            <person name="Rosovitz M.J."/>
            <person name="Myers G.S.A."/>
            <person name="Mongodin E.F."/>
            <person name="Fricke W.F."/>
            <person name="Gajer P."/>
            <person name="Crabtree J."/>
            <person name="Sebaihia M."/>
            <person name="Thomson N.R."/>
            <person name="Chaudhuri R."/>
            <person name="Henderson I.R."/>
            <person name="Sperandio V."/>
            <person name="Ravel J."/>
        </authorList>
    </citation>
    <scope>NUCLEOTIDE SEQUENCE [LARGE SCALE GENOMIC DNA]</scope>
    <source>
        <strain>HS</strain>
    </source>
</reference>
<protein>
    <recommendedName>
        <fullName evidence="1">L-rhamnose-proton symporter</fullName>
    </recommendedName>
    <alternativeName>
        <fullName evidence="1">L-rhamnose-H(+) transport protein</fullName>
    </alternativeName>
</protein>